<accession>Q86UW7</accession>
<accession>A4D0X3</accession>
<accession>B7ZM56</accession>
<accession>Q658Q2</accession>
<accession>Q7Z5T7</accession>
<accession>Q8IZW9</accession>
<accession>Q8N7M4</accession>
<accession>Q9H6P4</accession>
<accession>Q9HCI1</accession>
<accession>Q9NWK8</accession>
<reference key="1">
    <citation type="journal article" date="2003" name="J. Biol. Chem.">
        <title>A family of Ca2+-dependent activator proteins for secretion: comparative analysis of structure, expression, localization, and function.</title>
        <authorList>
            <person name="Speidel D."/>
            <person name="Varoqueaux F."/>
            <person name="Enk C."/>
            <person name="Nojiri M."/>
            <person name="Grishanin R.N."/>
            <person name="Martin T.F.J."/>
            <person name="Hofmann K."/>
            <person name="Brose N."/>
            <person name="Reim K."/>
        </authorList>
    </citation>
    <scope>NUCLEOTIDE SEQUENCE [MRNA] (ISOFORM 1)</scope>
</reference>
<reference key="2">
    <citation type="journal article" date="2003" name="Genomics">
        <title>Cloning and characterization of human CADPS and CADPS2, new members of the Ca2+-dependent activator for secretion protein family.</title>
        <authorList>
            <person name="Cisternas F.A."/>
            <person name="Vincent J.B."/>
            <person name="Scherer S.W."/>
            <person name="Ray P.N."/>
        </authorList>
    </citation>
    <scope>NUCLEOTIDE SEQUENCE [MRNA] (ISOFORM 2)</scope>
    <scope>TISSUE SPECIFICITY</scope>
    <scope>VARIANT THR-298</scope>
</reference>
<reference key="3">
    <citation type="journal article" date="2003" name="Nature">
        <title>The DNA sequence of human chromosome 7.</title>
        <authorList>
            <person name="Hillier L.W."/>
            <person name="Fulton R.S."/>
            <person name="Fulton L.A."/>
            <person name="Graves T.A."/>
            <person name="Pepin K.H."/>
            <person name="Wagner-McPherson C."/>
            <person name="Layman D."/>
            <person name="Maas J."/>
            <person name="Jaeger S."/>
            <person name="Walker R."/>
            <person name="Wylie K."/>
            <person name="Sekhon M."/>
            <person name="Becker M.C."/>
            <person name="O'Laughlin M.D."/>
            <person name="Schaller M.E."/>
            <person name="Fewell G.A."/>
            <person name="Delehaunty K.D."/>
            <person name="Miner T.L."/>
            <person name="Nash W.E."/>
            <person name="Cordes M."/>
            <person name="Du H."/>
            <person name="Sun H."/>
            <person name="Edwards J."/>
            <person name="Bradshaw-Cordum H."/>
            <person name="Ali J."/>
            <person name="Andrews S."/>
            <person name="Isak A."/>
            <person name="Vanbrunt A."/>
            <person name="Nguyen C."/>
            <person name="Du F."/>
            <person name="Lamar B."/>
            <person name="Courtney L."/>
            <person name="Kalicki J."/>
            <person name="Ozersky P."/>
            <person name="Bielicki L."/>
            <person name="Scott K."/>
            <person name="Holmes A."/>
            <person name="Harkins R."/>
            <person name="Harris A."/>
            <person name="Strong C.M."/>
            <person name="Hou S."/>
            <person name="Tomlinson C."/>
            <person name="Dauphin-Kohlberg S."/>
            <person name="Kozlowicz-Reilly A."/>
            <person name="Leonard S."/>
            <person name="Rohlfing T."/>
            <person name="Rock S.M."/>
            <person name="Tin-Wollam A.-M."/>
            <person name="Abbott A."/>
            <person name="Minx P."/>
            <person name="Maupin R."/>
            <person name="Strowmatt C."/>
            <person name="Latreille P."/>
            <person name="Miller N."/>
            <person name="Johnson D."/>
            <person name="Murray J."/>
            <person name="Woessner J.P."/>
            <person name="Wendl M.C."/>
            <person name="Yang S.-P."/>
            <person name="Schultz B.R."/>
            <person name="Wallis J.W."/>
            <person name="Spieth J."/>
            <person name="Bieri T.A."/>
            <person name="Nelson J.O."/>
            <person name="Berkowicz N."/>
            <person name="Wohldmann P.E."/>
            <person name="Cook L.L."/>
            <person name="Hickenbotham M.T."/>
            <person name="Eldred J."/>
            <person name="Williams D."/>
            <person name="Bedell J.A."/>
            <person name="Mardis E.R."/>
            <person name="Clifton S.W."/>
            <person name="Chissoe S.L."/>
            <person name="Marra M.A."/>
            <person name="Raymond C."/>
            <person name="Haugen E."/>
            <person name="Gillett W."/>
            <person name="Zhou Y."/>
            <person name="James R."/>
            <person name="Phelps K."/>
            <person name="Iadanoto S."/>
            <person name="Bubb K."/>
            <person name="Simms E."/>
            <person name="Levy R."/>
            <person name="Clendenning J."/>
            <person name="Kaul R."/>
            <person name="Kent W.J."/>
            <person name="Furey T.S."/>
            <person name="Baertsch R.A."/>
            <person name="Brent M.R."/>
            <person name="Keibler E."/>
            <person name="Flicek P."/>
            <person name="Bork P."/>
            <person name="Suyama M."/>
            <person name="Bailey J.A."/>
            <person name="Portnoy M.E."/>
            <person name="Torrents D."/>
            <person name="Chinwalla A.T."/>
            <person name="Gish W.R."/>
            <person name="Eddy S.R."/>
            <person name="McPherson J.D."/>
            <person name="Olson M.V."/>
            <person name="Eichler E.E."/>
            <person name="Green E.D."/>
            <person name="Waterston R.H."/>
            <person name="Wilson R.K."/>
        </authorList>
    </citation>
    <scope>NUCLEOTIDE SEQUENCE [LARGE SCALE GENOMIC DNA]</scope>
</reference>
<reference key="4">
    <citation type="journal article" date="2003" name="Science">
        <title>Human chromosome 7: DNA sequence and biology.</title>
        <authorList>
            <person name="Scherer S.W."/>
            <person name="Cheung J."/>
            <person name="MacDonald J.R."/>
            <person name="Osborne L.R."/>
            <person name="Nakabayashi K."/>
            <person name="Herbrick J.-A."/>
            <person name="Carson A.R."/>
            <person name="Parker-Katiraee L."/>
            <person name="Skaug J."/>
            <person name="Khaja R."/>
            <person name="Zhang J."/>
            <person name="Hudek A.K."/>
            <person name="Li M."/>
            <person name="Haddad M."/>
            <person name="Duggan G.E."/>
            <person name="Fernandez B.A."/>
            <person name="Kanematsu E."/>
            <person name="Gentles S."/>
            <person name="Christopoulos C.C."/>
            <person name="Choufani S."/>
            <person name="Kwasnicka D."/>
            <person name="Zheng X.H."/>
            <person name="Lai Z."/>
            <person name="Nusskern D.R."/>
            <person name="Zhang Q."/>
            <person name="Gu Z."/>
            <person name="Lu F."/>
            <person name="Zeesman S."/>
            <person name="Nowaczyk M.J."/>
            <person name="Teshima I."/>
            <person name="Chitayat D."/>
            <person name="Shuman C."/>
            <person name="Weksberg R."/>
            <person name="Zackai E.H."/>
            <person name="Grebe T.A."/>
            <person name="Cox S.R."/>
            <person name="Kirkpatrick S.J."/>
            <person name="Rahman N."/>
            <person name="Friedman J.M."/>
            <person name="Heng H.H.Q."/>
            <person name="Pelicci P.G."/>
            <person name="Lo-Coco F."/>
            <person name="Belloni E."/>
            <person name="Shaffer L.G."/>
            <person name="Pober B."/>
            <person name="Morton C.C."/>
            <person name="Gusella J.F."/>
            <person name="Bruns G.A.P."/>
            <person name="Korf B.R."/>
            <person name="Quade B.J."/>
            <person name="Ligon A.H."/>
            <person name="Ferguson H."/>
            <person name="Higgins A.W."/>
            <person name="Leach N.T."/>
            <person name="Herrick S.R."/>
            <person name="Lemyre E."/>
            <person name="Farra C.G."/>
            <person name="Kim H.-G."/>
            <person name="Summers A.M."/>
            <person name="Gripp K.W."/>
            <person name="Roberts W."/>
            <person name="Szatmari P."/>
            <person name="Winsor E.J.T."/>
            <person name="Grzeschik K.-H."/>
            <person name="Teebi A."/>
            <person name="Minassian B.A."/>
            <person name="Kere J."/>
            <person name="Armengol L."/>
            <person name="Pujana M.A."/>
            <person name="Estivill X."/>
            <person name="Wilson M.D."/>
            <person name="Koop B.F."/>
            <person name="Tosi S."/>
            <person name="Moore G.E."/>
            <person name="Boright A.P."/>
            <person name="Zlotorynski E."/>
            <person name="Kerem B."/>
            <person name="Kroisel P.M."/>
            <person name="Petek E."/>
            <person name="Oscier D.G."/>
            <person name="Mould S.J."/>
            <person name="Doehner H."/>
            <person name="Doehner K."/>
            <person name="Rommens J.M."/>
            <person name="Vincent J.B."/>
            <person name="Venter J.C."/>
            <person name="Li P.W."/>
            <person name="Mural R.J."/>
            <person name="Adams M.D."/>
            <person name="Tsui L.-C."/>
        </authorList>
    </citation>
    <scope>NUCLEOTIDE SEQUENCE [LARGE SCALE GENOMIC DNA]</scope>
</reference>
<reference key="5">
    <citation type="journal article" date="2004" name="Genome Res.">
        <title>The status, quality, and expansion of the NIH full-length cDNA project: the Mammalian Gene Collection (MGC).</title>
        <authorList>
            <consortium name="The MGC Project Team"/>
        </authorList>
    </citation>
    <scope>NUCLEOTIDE SEQUENCE [LARGE SCALE MRNA] (ISOFORM 2)</scope>
    <scope>NUCLEOTIDE SEQUENCE [LARGE SCALE MRNA] OF 1-180</scope>
    <source>
        <tissue>Brain</tissue>
        <tissue>Skin</tissue>
        <tissue>Testis</tissue>
    </source>
</reference>
<reference key="6">
    <citation type="journal article" date="2004" name="Nat. Genet.">
        <title>Complete sequencing and characterization of 21,243 full-length human cDNAs.</title>
        <authorList>
            <person name="Ota T."/>
            <person name="Suzuki Y."/>
            <person name="Nishikawa T."/>
            <person name="Otsuki T."/>
            <person name="Sugiyama T."/>
            <person name="Irie R."/>
            <person name="Wakamatsu A."/>
            <person name="Hayashi K."/>
            <person name="Sato H."/>
            <person name="Nagai K."/>
            <person name="Kimura K."/>
            <person name="Makita H."/>
            <person name="Sekine M."/>
            <person name="Obayashi M."/>
            <person name="Nishi T."/>
            <person name="Shibahara T."/>
            <person name="Tanaka T."/>
            <person name="Ishii S."/>
            <person name="Yamamoto J."/>
            <person name="Saito K."/>
            <person name="Kawai Y."/>
            <person name="Isono Y."/>
            <person name="Nakamura Y."/>
            <person name="Nagahari K."/>
            <person name="Murakami K."/>
            <person name="Yasuda T."/>
            <person name="Iwayanagi T."/>
            <person name="Wagatsuma M."/>
            <person name="Shiratori A."/>
            <person name="Sudo H."/>
            <person name="Hosoiri T."/>
            <person name="Kaku Y."/>
            <person name="Kodaira H."/>
            <person name="Kondo H."/>
            <person name="Sugawara M."/>
            <person name="Takahashi M."/>
            <person name="Kanda K."/>
            <person name="Yokoi T."/>
            <person name="Furuya T."/>
            <person name="Kikkawa E."/>
            <person name="Omura Y."/>
            <person name="Abe K."/>
            <person name="Kamihara K."/>
            <person name="Katsuta N."/>
            <person name="Sato K."/>
            <person name="Tanikawa M."/>
            <person name="Yamazaki M."/>
            <person name="Ninomiya K."/>
            <person name="Ishibashi T."/>
            <person name="Yamashita H."/>
            <person name="Murakawa K."/>
            <person name="Fujimori K."/>
            <person name="Tanai H."/>
            <person name="Kimata M."/>
            <person name="Watanabe M."/>
            <person name="Hiraoka S."/>
            <person name="Chiba Y."/>
            <person name="Ishida S."/>
            <person name="Ono Y."/>
            <person name="Takiguchi S."/>
            <person name="Watanabe S."/>
            <person name="Yosida M."/>
            <person name="Hotuta T."/>
            <person name="Kusano J."/>
            <person name="Kanehori K."/>
            <person name="Takahashi-Fujii A."/>
            <person name="Hara H."/>
            <person name="Tanase T.-O."/>
            <person name="Nomura Y."/>
            <person name="Togiya S."/>
            <person name="Komai F."/>
            <person name="Hara R."/>
            <person name="Takeuchi K."/>
            <person name="Arita M."/>
            <person name="Imose N."/>
            <person name="Musashino K."/>
            <person name="Yuuki H."/>
            <person name="Oshima A."/>
            <person name="Sasaki N."/>
            <person name="Aotsuka S."/>
            <person name="Yoshikawa Y."/>
            <person name="Matsunawa H."/>
            <person name="Ichihara T."/>
            <person name="Shiohata N."/>
            <person name="Sano S."/>
            <person name="Moriya S."/>
            <person name="Momiyama H."/>
            <person name="Satoh N."/>
            <person name="Takami S."/>
            <person name="Terashima Y."/>
            <person name="Suzuki O."/>
            <person name="Nakagawa S."/>
            <person name="Senoh A."/>
            <person name="Mizoguchi H."/>
            <person name="Goto Y."/>
            <person name="Shimizu F."/>
            <person name="Wakebe H."/>
            <person name="Hishigaki H."/>
            <person name="Watanabe T."/>
            <person name="Sugiyama A."/>
            <person name="Takemoto M."/>
            <person name="Kawakami B."/>
            <person name="Yamazaki M."/>
            <person name="Watanabe K."/>
            <person name="Kumagai A."/>
            <person name="Itakura S."/>
            <person name="Fukuzumi Y."/>
            <person name="Fujimori Y."/>
            <person name="Komiyama M."/>
            <person name="Tashiro H."/>
            <person name="Tanigami A."/>
            <person name="Fujiwara T."/>
            <person name="Ono T."/>
            <person name="Yamada K."/>
            <person name="Fujii Y."/>
            <person name="Ozaki K."/>
            <person name="Hirao M."/>
            <person name="Ohmori Y."/>
            <person name="Kawabata A."/>
            <person name="Hikiji T."/>
            <person name="Kobatake N."/>
            <person name="Inagaki H."/>
            <person name="Ikema Y."/>
            <person name="Okamoto S."/>
            <person name="Okitani R."/>
            <person name="Kawakami T."/>
            <person name="Noguchi S."/>
            <person name="Itoh T."/>
            <person name="Shigeta K."/>
            <person name="Senba T."/>
            <person name="Matsumura K."/>
            <person name="Nakajima Y."/>
            <person name="Mizuno T."/>
            <person name="Morinaga M."/>
            <person name="Sasaki M."/>
            <person name="Togashi T."/>
            <person name="Oyama M."/>
            <person name="Hata H."/>
            <person name="Watanabe M."/>
            <person name="Komatsu T."/>
            <person name="Mizushima-Sugano J."/>
            <person name="Satoh T."/>
            <person name="Shirai Y."/>
            <person name="Takahashi Y."/>
            <person name="Nakagawa K."/>
            <person name="Okumura K."/>
            <person name="Nagase T."/>
            <person name="Nomura N."/>
            <person name="Kikuchi H."/>
            <person name="Masuho Y."/>
            <person name="Yamashita R."/>
            <person name="Nakai K."/>
            <person name="Yada T."/>
            <person name="Nakamura Y."/>
            <person name="Ohara O."/>
            <person name="Isogai T."/>
            <person name="Sugano S."/>
        </authorList>
    </citation>
    <scope>NUCLEOTIDE SEQUENCE [LARGE SCALE MRNA] OF 1-506 (ISOFORM 1)</scope>
    <scope>NUCLEOTIDE SEQUENCE [LARGE SCALE MRNA] OF 804-1296 (ISOFORM 2)</scope>
    <scope>NUCLEOTIDE SEQUENCE [LARGE SCALE MRNA] OF 353-1296 (ISOFORM 3)</scope>
    <source>
        <tissue>Hepatoma</tissue>
        <tissue>Trachea</tissue>
    </source>
</reference>
<reference key="7">
    <citation type="journal article" date="2000" name="DNA Res.">
        <title>Prediction of the coding sequences of unidentified human genes. XVIII. The complete sequences of 100 new cDNA clones from brain which code for large proteins in vitro.</title>
        <authorList>
            <person name="Nagase T."/>
            <person name="Kikuno R."/>
            <person name="Nakayama M."/>
            <person name="Hirosawa M."/>
            <person name="Ohara O."/>
        </authorList>
    </citation>
    <scope>NUCLEOTIDE SEQUENCE [LARGE SCALE MRNA] OF 238-1296 (ISOFORM 2)</scope>
</reference>
<reference key="8">
    <citation type="journal article" date="2007" name="BMC Genomics">
        <title>The full-ORF clone resource of the German cDNA consortium.</title>
        <authorList>
            <person name="Bechtel S."/>
            <person name="Rosenfelder H."/>
            <person name="Duda A."/>
            <person name="Schmidt C.P."/>
            <person name="Ernst U."/>
            <person name="Wellenreuther R."/>
            <person name="Mehrle A."/>
            <person name="Schuster C."/>
            <person name="Bahr A."/>
            <person name="Bloecker H."/>
            <person name="Heubner D."/>
            <person name="Hoerlein A."/>
            <person name="Michel G."/>
            <person name="Wedler H."/>
            <person name="Koehrer K."/>
            <person name="Ottenwaelder B."/>
            <person name="Poustka A."/>
            <person name="Wiemann S."/>
            <person name="Schupp I."/>
        </authorList>
    </citation>
    <scope>NUCLEOTIDE SEQUENCE [LARGE SCALE MRNA] OF 262-1296 (ISOFORM 2)</scope>
    <source>
        <tissue>Stomach</tissue>
    </source>
</reference>
<reference key="9">
    <citation type="journal article" date="2005" name="Biochem. Pharmacol.">
        <title>Regulation of dense core vesicle release from PC12 cells by interaction between the D2 dopamine receptor and calcium-dependent activator protein for secretion (CAPS).</title>
        <authorList>
            <person name="Binda A.V."/>
            <person name="Kabbani N."/>
            <person name="Levenson R."/>
        </authorList>
    </citation>
    <scope>INTERACTION WITH DRD2</scope>
</reference>
<reference key="10">
    <citation type="journal article" date="2011" name="Sci. Signal.">
        <title>System-wide temporal characterization of the proteome and phosphoproteome of human embryonic stem cell differentiation.</title>
        <authorList>
            <person name="Rigbolt K.T."/>
            <person name="Prokhorova T.A."/>
            <person name="Akimov V."/>
            <person name="Henningsen J."/>
            <person name="Johansen P.T."/>
            <person name="Kratchmarova I."/>
            <person name="Kassem M."/>
            <person name="Mann M."/>
            <person name="Olsen J.V."/>
            <person name="Blagoev B."/>
        </authorList>
    </citation>
    <scope>PHOSPHORYLATION [LARGE SCALE ANALYSIS] AT SER-56 AND SER-58</scope>
    <scope>IDENTIFICATION BY MASS SPECTROMETRY [LARGE SCALE ANALYSIS]</scope>
</reference>
<reference key="11">
    <citation type="journal article" date="2024" name="Nat. Commun.">
        <title>Uncovering structural themes across cilia microtubule inner proteins with implications for human cilia function.</title>
        <authorList>
            <person name="Andersen J.S."/>
            <person name="Vijayakumaran A."/>
            <person name="Godbehere C."/>
            <person name="Lorentzen E."/>
            <person name="Mennella V."/>
            <person name="Schou K.B."/>
        </authorList>
    </citation>
    <scope>SUBCELLULAR LOCATION</scope>
    <scope>IDENTIFICATION OF DM10 DOMAIN</scope>
</reference>
<dbReference type="EMBL" id="AY264289">
    <property type="protein sequence ID" value="AAP22132.1"/>
    <property type="molecule type" value="mRNA"/>
</dbReference>
<dbReference type="EMBL" id="AF401638">
    <property type="protein sequence ID" value="AAN38707.1"/>
    <property type="molecule type" value="mRNA"/>
</dbReference>
<dbReference type="EMBL" id="AC004594">
    <property type="status" value="NOT_ANNOTATED_CDS"/>
    <property type="molecule type" value="Genomic_DNA"/>
</dbReference>
<dbReference type="EMBL" id="AC004838">
    <property type="status" value="NOT_ANNOTATED_CDS"/>
    <property type="molecule type" value="Genomic_DNA"/>
</dbReference>
<dbReference type="EMBL" id="AC004986">
    <property type="status" value="NOT_ANNOTATED_CDS"/>
    <property type="molecule type" value="Genomic_DNA"/>
</dbReference>
<dbReference type="EMBL" id="AC006009">
    <property type="status" value="NOT_ANNOTATED_CDS"/>
    <property type="molecule type" value="Genomic_DNA"/>
</dbReference>
<dbReference type="EMBL" id="AC006463">
    <property type="status" value="NOT_ANNOTATED_CDS"/>
    <property type="molecule type" value="Genomic_DNA"/>
</dbReference>
<dbReference type="EMBL" id="AC015983">
    <property type="status" value="NOT_ANNOTATED_CDS"/>
    <property type="molecule type" value="Genomic_DNA"/>
</dbReference>
<dbReference type="EMBL" id="AC091438">
    <property type="status" value="NOT_ANNOTATED_CDS"/>
    <property type="molecule type" value="Genomic_DNA"/>
</dbReference>
<dbReference type="EMBL" id="CH236947">
    <property type="protein sequence ID" value="EAL24339.1"/>
    <property type="molecule type" value="Genomic_DNA"/>
</dbReference>
<dbReference type="EMBL" id="BC054339">
    <property type="protein sequence ID" value="AAH54339.1"/>
    <property type="status" value="ALT_SEQ"/>
    <property type="molecule type" value="mRNA"/>
</dbReference>
<dbReference type="EMBL" id="BC136601">
    <property type="protein sequence ID" value="AAI36602.1"/>
    <property type="molecule type" value="mRNA"/>
</dbReference>
<dbReference type="EMBL" id="BC144278">
    <property type="protein sequence ID" value="AAI44279.1"/>
    <property type="molecule type" value="mRNA"/>
</dbReference>
<dbReference type="EMBL" id="AK000768">
    <property type="protein sequence ID" value="BAA91372.1"/>
    <property type="status" value="ALT_INIT"/>
    <property type="molecule type" value="mRNA"/>
</dbReference>
<dbReference type="EMBL" id="AK025672">
    <property type="protein sequence ID" value="BAB15210.1"/>
    <property type="status" value="ALT_INIT"/>
    <property type="molecule type" value="mRNA"/>
</dbReference>
<dbReference type="EMBL" id="AK098170">
    <property type="status" value="NOT_ANNOTATED_CDS"/>
    <property type="molecule type" value="mRNA"/>
</dbReference>
<dbReference type="EMBL" id="AB046811">
    <property type="protein sequence ID" value="BAB13417.1"/>
    <property type="molecule type" value="mRNA"/>
</dbReference>
<dbReference type="EMBL" id="AL833058">
    <property type="protein sequence ID" value="CAH56288.1"/>
    <property type="molecule type" value="mRNA"/>
</dbReference>
<dbReference type="CCDS" id="CCDS47691.1">
    <molecule id="Q86UW7-2"/>
</dbReference>
<dbReference type="CCDS" id="CCDS55158.1">
    <molecule id="Q86UW7-1"/>
</dbReference>
<dbReference type="RefSeq" id="NP_001009571.2">
    <molecule id="Q86UW7-2"/>
    <property type="nucleotide sequence ID" value="NM_001009571.4"/>
</dbReference>
<dbReference type="RefSeq" id="NP_001161412.1">
    <property type="nucleotide sequence ID" value="NM_001167940.1"/>
</dbReference>
<dbReference type="RefSeq" id="NP_001350327.1">
    <molecule id="Q86UW7-3"/>
    <property type="nucleotide sequence ID" value="NM_001363398.2"/>
</dbReference>
<dbReference type="RefSeq" id="NP_060424.9">
    <molecule id="Q86UW7-1"/>
    <property type="nucleotide sequence ID" value="NM_017954.10"/>
</dbReference>
<dbReference type="SMR" id="Q86UW7"/>
<dbReference type="BioGRID" id="125051">
    <property type="interactions" value="24"/>
</dbReference>
<dbReference type="FunCoup" id="Q86UW7">
    <property type="interactions" value="1072"/>
</dbReference>
<dbReference type="IntAct" id="Q86UW7">
    <property type="interactions" value="19"/>
</dbReference>
<dbReference type="MINT" id="Q86UW7"/>
<dbReference type="STRING" id="9606.ENSP00000398481"/>
<dbReference type="DrugBank" id="DB11093">
    <property type="generic name" value="Calcium citrate"/>
</dbReference>
<dbReference type="DrugBank" id="DB11348">
    <property type="generic name" value="Calcium Phosphate"/>
</dbReference>
<dbReference type="DrugBank" id="DB14481">
    <property type="generic name" value="Calcium phosphate dihydrate"/>
</dbReference>
<dbReference type="iPTMnet" id="Q86UW7"/>
<dbReference type="PhosphoSitePlus" id="Q86UW7"/>
<dbReference type="BioMuta" id="CADPS2"/>
<dbReference type="DMDM" id="85540964"/>
<dbReference type="jPOST" id="Q86UW7"/>
<dbReference type="MassIVE" id="Q86UW7"/>
<dbReference type="PaxDb" id="9606-ENSP00000398481"/>
<dbReference type="PeptideAtlas" id="Q86UW7"/>
<dbReference type="ProteomicsDB" id="69919">
    <molecule id="Q86UW7-1"/>
</dbReference>
<dbReference type="ProteomicsDB" id="69920">
    <molecule id="Q86UW7-2"/>
</dbReference>
<dbReference type="ProteomicsDB" id="69921">
    <molecule id="Q86UW7-3"/>
</dbReference>
<dbReference type="Pumba" id="Q86UW7"/>
<dbReference type="Antibodypedia" id="31729">
    <property type="antibodies" value="57 antibodies from 24 providers"/>
</dbReference>
<dbReference type="DNASU" id="93664"/>
<dbReference type="Ensembl" id="ENST00000412584.6">
    <molecule id="Q86UW7-2"/>
    <property type="protein sequence ID" value="ENSP00000400401.2"/>
    <property type="gene ID" value="ENSG00000081803.17"/>
</dbReference>
<dbReference type="Ensembl" id="ENST00000449022.7">
    <molecule id="Q86UW7-1"/>
    <property type="protein sequence ID" value="ENSP00000398481.2"/>
    <property type="gene ID" value="ENSG00000081803.17"/>
</dbReference>
<dbReference type="GeneID" id="93664"/>
<dbReference type="KEGG" id="hsa:93664"/>
<dbReference type="MANE-Select" id="ENST00000449022.7">
    <property type="protein sequence ID" value="ENSP00000398481.2"/>
    <property type="RefSeq nucleotide sequence ID" value="NM_017954.11"/>
    <property type="RefSeq protein sequence ID" value="NP_060424.9"/>
</dbReference>
<dbReference type="UCSC" id="uc064hnn.1">
    <molecule id="Q86UW7-1"/>
    <property type="organism name" value="human"/>
</dbReference>
<dbReference type="AGR" id="HGNC:16018"/>
<dbReference type="CTD" id="93664"/>
<dbReference type="DisGeNET" id="93664"/>
<dbReference type="GeneCards" id="CADPS2"/>
<dbReference type="HGNC" id="HGNC:16018">
    <property type="gene designation" value="CADPS2"/>
</dbReference>
<dbReference type="HPA" id="ENSG00000081803">
    <property type="expression patterns" value="Tissue enhanced (brain)"/>
</dbReference>
<dbReference type="MalaCards" id="CADPS2"/>
<dbReference type="MIM" id="609978">
    <property type="type" value="gene"/>
</dbReference>
<dbReference type="neXtProt" id="NX_Q86UW7"/>
<dbReference type="OpenTargets" id="ENSG00000081803"/>
<dbReference type="PharmGKB" id="PA26025"/>
<dbReference type="VEuPathDB" id="HostDB:ENSG00000081803"/>
<dbReference type="eggNOG" id="KOG3543">
    <property type="taxonomic scope" value="Eukaryota"/>
</dbReference>
<dbReference type="GeneTree" id="ENSGT00590000083094"/>
<dbReference type="InParanoid" id="Q86UW7"/>
<dbReference type="OMA" id="LSFTLEX"/>
<dbReference type="OrthoDB" id="10063282at2759"/>
<dbReference type="PAN-GO" id="Q86UW7">
    <property type="GO annotations" value="3 GO annotations based on evolutionary models"/>
</dbReference>
<dbReference type="PhylomeDB" id="Q86UW7"/>
<dbReference type="PathwayCommons" id="Q86UW7"/>
<dbReference type="SignaLink" id="Q86UW7"/>
<dbReference type="SIGNOR" id="Q86UW7"/>
<dbReference type="BioGRID-ORCS" id="93664">
    <property type="hits" value="12 hits in 1147 CRISPR screens"/>
</dbReference>
<dbReference type="ChiTaRS" id="CADPS2">
    <property type="organism name" value="human"/>
</dbReference>
<dbReference type="GeneWiki" id="CADPS2"/>
<dbReference type="GenomeRNAi" id="93664"/>
<dbReference type="Pharos" id="Q86UW7">
    <property type="development level" value="Tbio"/>
</dbReference>
<dbReference type="PRO" id="PR:Q86UW7"/>
<dbReference type="Proteomes" id="UP000005640">
    <property type="component" value="Chromosome 7"/>
</dbReference>
<dbReference type="RNAct" id="Q86UW7">
    <property type="molecule type" value="protein"/>
</dbReference>
<dbReference type="Bgee" id="ENSG00000081803">
    <property type="expression patterns" value="Expressed in cerebellar vermis and 170 other cell types or tissues"/>
</dbReference>
<dbReference type="ExpressionAtlas" id="Q86UW7">
    <property type="expression patterns" value="baseline and differential"/>
</dbReference>
<dbReference type="GO" id="GO:0005813">
    <property type="term" value="C:centrosome"/>
    <property type="evidence" value="ECO:0000314"/>
    <property type="project" value="UniProtKB"/>
</dbReference>
<dbReference type="GO" id="GO:0036064">
    <property type="term" value="C:ciliary basal body"/>
    <property type="evidence" value="ECO:0000314"/>
    <property type="project" value="UniProtKB"/>
</dbReference>
<dbReference type="GO" id="GO:0005929">
    <property type="term" value="C:cilium"/>
    <property type="evidence" value="ECO:0000314"/>
    <property type="project" value="UniProtKB"/>
</dbReference>
<dbReference type="GO" id="GO:0030659">
    <property type="term" value="C:cytoplasmic vesicle membrane"/>
    <property type="evidence" value="ECO:0007669"/>
    <property type="project" value="UniProtKB-SubCell"/>
</dbReference>
<dbReference type="GO" id="GO:0098978">
    <property type="term" value="C:glutamatergic synapse"/>
    <property type="evidence" value="ECO:0000318"/>
    <property type="project" value="GO_Central"/>
</dbReference>
<dbReference type="GO" id="GO:0043231">
    <property type="term" value="C:intracellular membrane-bounded organelle"/>
    <property type="evidence" value="ECO:0000314"/>
    <property type="project" value="HPA"/>
</dbReference>
<dbReference type="GO" id="GO:0005654">
    <property type="term" value="C:nucleoplasm"/>
    <property type="evidence" value="ECO:0000314"/>
    <property type="project" value="HPA"/>
</dbReference>
<dbReference type="GO" id="GO:0098688">
    <property type="term" value="C:parallel fiber to Purkinje cell synapse"/>
    <property type="evidence" value="ECO:0007669"/>
    <property type="project" value="Ensembl"/>
</dbReference>
<dbReference type="GO" id="GO:0045211">
    <property type="term" value="C:postsynaptic membrane"/>
    <property type="evidence" value="ECO:0007669"/>
    <property type="project" value="Ensembl"/>
</dbReference>
<dbReference type="GO" id="GO:0042734">
    <property type="term" value="C:presynaptic membrane"/>
    <property type="evidence" value="ECO:0007669"/>
    <property type="project" value="Ensembl"/>
</dbReference>
<dbReference type="GO" id="GO:0008289">
    <property type="term" value="F:lipid binding"/>
    <property type="evidence" value="ECO:0007669"/>
    <property type="project" value="UniProtKB-KW"/>
</dbReference>
<dbReference type="GO" id="GO:0046872">
    <property type="term" value="F:metal ion binding"/>
    <property type="evidence" value="ECO:0007669"/>
    <property type="project" value="UniProtKB-KW"/>
</dbReference>
<dbReference type="GO" id="GO:0009267">
    <property type="term" value="P:cellular response to starvation"/>
    <property type="evidence" value="ECO:0007669"/>
    <property type="project" value="Ensembl"/>
</dbReference>
<dbReference type="GO" id="GO:1990504">
    <property type="term" value="P:dense core granule exocytosis"/>
    <property type="evidence" value="ECO:0007669"/>
    <property type="project" value="InterPro"/>
</dbReference>
<dbReference type="GO" id="GO:0006887">
    <property type="term" value="P:exocytosis"/>
    <property type="evidence" value="ECO:0000318"/>
    <property type="project" value="GO_Central"/>
</dbReference>
<dbReference type="GO" id="GO:0061484">
    <property type="term" value="P:hematopoietic stem cell homeostasis"/>
    <property type="evidence" value="ECO:0007669"/>
    <property type="project" value="Ensembl"/>
</dbReference>
<dbReference type="GO" id="GO:0045921">
    <property type="term" value="P:positive regulation of exocytosis"/>
    <property type="evidence" value="ECO:0000318"/>
    <property type="project" value="GO_Central"/>
</dbReference>
<dbReference type="GO" id="GO:0015031">
    <property type="term" value="P:protein transport"/>
    <property type="evidence" value="ECO:0007669"/>
    <property type="project" value="UniProtKB-KW"/>
</dbReference>
<dbReference type="GO" id="GO:0016082">
    <property type="term" value="P:synaptic vesicle priming"/>
    <property type="evidence" value="ECO:0007669"/>
    <property type="project" value="Ensembl"/>
</dbReference>
<dbReference type="CDD" id="cd01234">
    <property type="entry name" value="PH_CADPS"/>
    <property type="match status" value="1"/>
</dbReference>
<dbReference type="FunFam" id="2.30.29.30:FF:000007">
    <property type="entry name" value="Calcium-dependent secretion activator 2 isoform B"/>
    <property type="match status" value="1"/>
</dbReference>
<dbReference type="Gene3D" id="2.30.29.30">
    <property type="entry name" value="Pleckstrin-homology domain (PH domain)/Phosphotyrosine-binding domain (PTB)"/>
    <property type="match status" value="1"/>
</dbReference>
<dbReference type="InterPro" id="IPR000008">
    <property type="entry name" value="C2_dom"/>
</dbReference>
<dbReference type="InterPro" id="IPR035892">
    <property type="entry name" value="C2_domain_sf"/>
</dbReference>
<dbReference type="InterPro" id="IPR033227">
    <property type="entry name" value="CAPS"/>
</dbReference>
<dbReference type="InterPro" id="IPR010439">
    <property type="entry name" value="MUN_dom"/>
</dbReference>
<dbReference type="InterPro" id="IPR014770">
    <property type="entry name" value="Munc13_1"/>
</dbReference>
<dbReference type="InterPro" id="IPR011993">
    <property type="entry name" value="PH-like_dom_sf"/>
</dbReference>
<dbReference type="InterPro" id="IPR001849">
    <property type="entry name" value="PH_domain"/>
</dbReference>
<dbReference type="PANTHER" id="PTHR12166">
    <property type="entry name" value="CALCIUM-DEPENDENT SECRETION ACTIVATOR"/>
    <property type="match status" value="1"/>
</dbReference>
<dbReference type="PANTHER" id="PTHR12166:SF7">
    <property type="entry name" value="CALCIUM-DEPENDENT SECRETION ACTIVATOR 2"/>
    <property type="match status" value="1"/>
</dbReference>
<dbReference type="Pfam" id="PF25341">
    <property type="entry name" value="C2_CAPS"/>
    <property type="match status" value="1"/>
</dbReference>
<dbReference type="Pfam" id="PF06292">
    <property type="entry name" value="MUN"/>
    <property type="match status" value="2"/>
</dbReference>
<dbReference type="Pfam" id="PF00169">
    <property type="entry name" value="PH"/>
    <property type="match status" value="1"/>
</dbReference>
<dbReference type="SMART" id="SM01145">
    <property type="entry name" value="DUF1041"/>
    <property type="match status" value="1"/>
</dbReference>
<dbReference type="SMART" id="SM00233">
    <property type="entry name" value="PH"/>
    <property type="match status" value="1"/>
</dbReference>
<dbReference type="SUPFAM" id="SSF49562">
    <property type="entry name" value="C2 domain (Calcium/lipid-binding domain, CaLB)"/>
    <property type="match status" value="1"/>
</dbReference>
<dbReference type="SUPFAM" id="SSF50729">
    <property type="entry name" value="PH domain-like"/>
    <property type="match status" value="1"/>
</dbReference>
<dbReference type="PROSITE" id="PS50004">
    <property type="entry name" value="C2"/>
    <property type="match status" value="1"/>
</dbReference>
<dbReference type="PROSITE" id="PS51258">
    <property type="entry name" value="MHD1"/>
    <property type="match status" value="1"/>
</dbReference>
<dbReference type="PROSITE" id="PS50003">
    <property type="entry name" value="PH_DOMAIN"/>
    <property type="match status" value="1"/>
</dbReference>
<proteinExistence type="evidence at protein level"/>
<sequence length="1296" mass="147735">MLDPSSSEEESDEGLEEESRDVLVAAGSSQRAPPAPTREGRRDAPGRAGGGGAARSVSPSPSVLSEGRDEPQRQLDDEQERRIRLQLYVFVVRCIAYPFNAKQPTDMARRQQKLNKQQLQLLKERFQAFLNGETQIVADEAFCNAVRSYYEVFLKSDRVARMVQSGGCSANDFREVFKKNIEKRVRSLPEIDGLSKETVLSSWIAKYDAIYRGEEDLCKQPNRMALSAVSELILSKEQLYEMFQQILGIKKLEHQLLYNACQLDNADEQAAQIRRELDGRLQLADKMAKERKFPKFIAKDMENMYIEELRSSVNLLMANLESLPVSKGGPEFKLQKLKRSQNSAFLDIGDENEIQLSKSDVVLSFTLEIVIMEVQGLKSVAPNRIVYCTMEVEGEKLQTDQAEASRPQWGTQGDFTTTHPRPVVKVKLFTESTGVLALEDKELGRVILYPTSNSSKSAELHRMVVPKNSQDSDLKIKLAVRMDKPAHMKHSGYLYALGQKVWKRWKKRYFVLVQVSQYTFAMCSYREKKSEPQELMQLEGYTVDYTDPHPGLQGGCMFFNAVKEGDTVIFASDDEQDRILWVQAMYRATGQSYKPVPAIQTQKLNPKGGTLHADAQLSGKDADRFQKHGMDEFISANPCKLDHAFLFRILQRQTLDHRLNDSYSCLGWFSPGQVFVLDEYCARYGVRGCHRHLCYLAELMEHSENGAVIDPTLLHYSFAFCASHVHGNRPDGIGTVSVEEKERFEEIKERLSSLLENQISHFRYCFPFGRPEGALKATLSLLERVLMKDIATPIPAEEVKKVVRKCLEKAALINYTRLTEYAKIEETMNQASPARKLEEILHLAELCIEVLQQNEEHHAEGREAFAWWPDLLAEHAEKFWALFTVDMDTALEAQPQDSWDSFPLFQLLNNFLRNDTLLCNGKFHKHLQEIFVPLVVRYVDLMESSIAQSIHRGFEQETWQPVKNIANSLPNVALPKVPSLPLNLPQIPNISTASWMPSLYESTNGSATSEDLFWKLDALQMFVFDLHWPEQEFAHHLEQRLKLMASDMLEACVKRTRTAFELKLQKASKTTDLRIPASVCTMFNVLVDAKKQSTKLCALDGGQEQQYHSKIDDLIDNSVKEIISLLVSKFVSVLEGVLSKLSRYDEGTFFSSILSFTVKAAAKYVDVPKPGMDLADTYIMFVRQNQDILREKVNEEMYIEKLFDQWYSSSMKVICVWLTDRLDLQLHIYQLKTLIKIVKKTYRDFRLQGVLEGTLNSKTYDTVHRRLTVEEATASVSEGGGLQGITMKDSDEEEEG</sequence>
<evidence type="ECO:0000250" key="1"/>
<evidence type="ECO:0000250" key="2">
    <source>
        <dbReference type="UniProtKB" id="Q8BYR5"/>
    </source>
</evidence>
<evidence type="ECO:0000255" key="3">
    <source>
        <dbReference type="PROSITE-ProRule" id="PRU00041"/>
    </source>
</evidence>
<evidence type="ECO:0000255" key="4">
    <source>
        <dbReference type="PROSITE-ProRule" id="PRU00145"/>
    </source>
</evidence>
<evidence type="ECO:0000255" key="5">
    <source>
        <dbReference type="PROSITE-ProRule" id="PRU00587"/>
    </source>
</evidence>
<evidence type="ECO:0000256" key="6">
    <source>
        <dbReference type="SAM" id="MobiDB-lite"/>
    </source>
</evidence>
<evidence type="ECO:0000269" key="7">
    <source>
    </source>
</evidence>
<evidence type="ECO:0000269" key="8">
    <source>
    </source>
</evidence>
<evidence type="ECO:0000269" key="9">
    <source>
    </source>
</evidence>
<evidence type="ECO:0000303" key="10">
    <source>
    </source>
</evidence>
<evidence type="ECO:0000303" key="11">
    <source>
    </source>
</evidence>
<evidence type="ECO:0000303" key="12">
    <source>
    </source>
</evidence>
<evidence type="ECO:0000303" key="13">
    <source>
    </source>
</evidence>
<evidence type="ECO:0000303" key="14">
    <source>
    </source>
</evidence>
<evidence type="ECO:0000305" key="15"/>
<evidence type="ECO:0000305" key="16">
    <source>
    </source>
</evidence>
<evidence type="ECO:0007744" key="17">
    <source>
    </source>
</evidence>
<comment type="function">
    <text evidence="1">Calcium-binding protein involved in exocytosis of vesicles filled with neurotransmitters and neuropeptides. Probably acts upstream of fusion in the biogenesis or maintenance of mature secretory vesicles. Regulates neurotrophin release from granule cells leading to regulate cell differentiation and survival during cerebellar development. May specifically mediate the Ca(2+)-dependent exocytosis of large dense-core vesicles (DCVs) and other dense-core vesicles (By similarity).</text>
</comment>
<comment type="subunit">
    <text evidence="1 8">Homodimer (By similarity). Interacts with the dopamine receptor DRD2.</text>
</comment>
<comment type="subcellular location">
    <subcellularLocation>
        <location evidence="15">Cytoplasmic vesicle membrane</location>
        <topology evidence="15">Peripheral membrane protein</topology>
        <orientation evidence="15">Cytoplasmic side</orientation>
    </subcellularLocation>
    <subcellularLocation>
        <location>Synapse</location>
    </subcellularLocation>
    <subcellularLocation>
        <location evidence="9">Cell projection</location>
        <location evidence="9">Cilium</location>
    </subcellularLocation>
    <subcellularLocation>
        <location evidence="9">Cytoplasm</location>
        <location evidence="9">Cytoskeleton</location>
        <location evidence="9">Cilium basal body</location>
    </subcellularLocation>
    <subcellularLocation>
        <location evidence="9">Cytoplasm</location>
        <location evidence="9">Cytoskeleton</location>
        <location evidence="9">Microtubule organizing center</location>
        <location evidence="9">Centrosome</location>
    </subcellularLocation>
    <text>Membrane-associated to vesicles. Strongly enriched in synaptic fra,ctions. Probably localizes to different vesicles compared to CADPS. Enriched on vesicular structures in the parallel fiber terminal of granule cells that are distinct from synaptic vesicles.</text>
</comment>
<comment type="alternative products">
    <event type="alternative splicing"/>
    <isoform>
        <id>Q86UW7-1</id>
        <name>1</name>
        <sequence type="displayed"/>
    </isoform>
    <isoform>
        <id>Q86UW7-2</id>
        <name>2</name>
        <sequence type="described" ref="VSP_016815 VSP_016816 VSP_016817 VSP_016818"/>
    </isoform>
    <isoform>
        <id>Q86UW7-3</id>
        <name>3</name>
        <sequence type="described" ref="VSP_016815 VSP_016816 VSP_016817"/>
    </isoform>
</comment>
<comment type="tissue specificity">
    <text evidence="7">Widely expressed. Expressed in all adult and fetal tissues examined, with the strongest expression in kidney and pancreas. In brain, it is expressed at high levels in cerebellum, to a lesser degree in cerebral cortex, occipital pole, and frontal and temporal lobes. Only weakly expressed in medulla, spinal cord and putamen.</text>
</comment>
<comment type="domain">
    <text evidence="1">The PH domain is essential for regulated exocytosis and binds phospholipids.</text>
</comment>
<comment type="sequence caution" evidence="15">
    <conflict type="miscellaneous discrepancy">
        <sequence resource="EMBL-CDS" id="AAH54339"/>
    </conflict>
    <text>Contaminating sequence. Potential poly-A sequence.</text>
</comment>
<comment type="sequence caution" evidence="15">
    <conflict type="miscellaneous discrepancy">
        <sequence resource="EMBL" id="AK098170"/>
    </conflict>
    <text>Chimera.</text>
</comment>
<comment type="sequence caution" evidence="15">
    <conflict type="erroneous initiation">
        <sequence resource="EMBL-CDS" id="BAA91372"/>
    </conflict>
</comment>
<comment type="sequence caution" evidence="15">
    <conflict type="erroneous initiation">
        <sequence resource="EMBL-CDS" id="BAB15210"/>
    </conflict>
</comment>
<organism>
    <name type="scientific">Homo sapiens</name>
    <name type="common">Human</name>
    <dbReference type="NCBI Taxonomy" id="9606"/>
    <lineage>
        <taxon>Eukaryota</taxon>
        <taxon>Metazoa</taxon>
        <taxon>Chordata</taxon>
        <taxon>Craniata</taxon>
        <taxon>Vertebrata</taxon>
        <taxon>Euteleostomi</taxon>
        <taxon>Mammalia</taxon>
        <taxon>Eutheria</taxon>
        <taxon>Euarchontoglires</taxon>
        <taxon>Primates</taxon>
        <taxon>Haplorrhini</taxon>
        <taxon>Catarrhini</taxon>
        <taxon>Hominidae</taxon>
        <taxon>Homo</taxon>
    </lineage>
</organism>
<gene>
    <name type="primary">CADPS2</name>
    <name type="synonym">CAPS2</name>
    <name type="synonym">KIAA1591</name>
</gene>
<protein>
    <recommendedName>
        <fullName>Calcium-dependent secretion activator 2</fullName>
    </recommendedName>
    <alternativeName>
        <fullName>Calcium-dependent activator protein for secretion 2</fullName>
        <shortName>CAPS-2</shortName>
    </alternativeName>
</protein>
<feature type="chain" id="PRO_0000053868" description="Calcium-dependent secretion activator 2">
    <location>
        <begin position="1"/>
        <end position="1296"/>
    </location>
</feature>
<feature type="domain" description="DM10" evidence="16">
    <location>
        <begin position="293"/>
        <end position="400"/>
    </location>
</feature>
<feature type="domain" description="C2" evidence="3">
    <location>
        <begin position="350"/>
        <end position="464"/>
    </location>
</feature>
<feature type="domain" description="PH" evidence="4">
    <location>
        <begin position="487"/>
        <end position="590"/>
    </location>
</feature>
<feature type="domain" description="MHD1" evidence="5">
    <location>
        <begin position="885"/>
        <end position="1056"/>
    </location>
</feature>
<feature type="region of interest" description="Disordered" evidence="6">
    <location>
        <begin position="1"/>
        <end position="78"/>
    </location>
</feature>
<feature type="region of interest" description="Interaction with DRD2" evidence="8">
    <location>
        <begin position="755"/>
        <end position="1074"/>
    </location>
</feature>
<feature type="region of interest" description="Disordered" evidence="6">
    <location>
        <begin position="1274"/>
        <end position="1296"/>
    </location>
</feature>
<feature type="compositionally biased region" description="Acidic residues" evidence="6">
    <location>
        <begin position="1"/>
        <end position="19"/>
    </location>
</feature>
<feature type="compositionally biased region" description="Basic and acidic residues" evidence="6">
    <location>
        <begin position="66"/>
        <end position="78"/>
    </location>
</feature>
<feature type="modified residue" description="Phosphoserine" evidence="17">
    <location>
        <position position="56"/>
    </location>
</feature>
<feature type="modified residue" description="Phosphoserine" evidence="17">
    <location>
        <position position="58"/>
    </location>
</feature>
<feature type="modified residue" description="Phosphoserine" evidence="2">
    <location>
        <position position="1290"/>
    </location>
</feature>
<feature type="splice variant" id="VSP_016815" description="In isoform 2 and isoform 3." evidence="10 11 12 13 14">
    <original>SGKD</original>
    <variation>Y</variation>
    <location>
        <begin position="618"/>
        <end position="621"/>
    </location>
</feature>
<feature type="splice variant" id="VSP_016816" description="In isoform 2 and isoform 3." evidence="10 11 12 13 14">
    <location>
        <begin position="860"/>
        <end position="862"/>
    </location>
</feature>
<feature type="splice variant" id="VSP_016817" description="In isoform 2 and isoform 3." evidence="10 11 12 13 14">
    <original>KNIANSLPNVALPKVPSLPLNLPQIPNISTASWMPSLYEST</original>
    <variation>N</variation>
    <location>
        <begin position="963"/>
        <end position="1003"/>
    </location>
</feature>
<feature type="splice variant" id="VSP_016818" description="In isoform 2." evidence="10 11 12 13 14">
    <original>E</original>
    <variation>EFGSQW</variation>
    <location>
        <position position="1104"/>
    </location>
</feature>
<feature type="sequence variant" id="VAR_024786" description="In dbSNP:rs17144625." evidence="7">
    <original>A</original>
    <variation>T</variation>
    <location>
        <position position="298"/>
    </location>
</feature>
<feature type="sequence conflict" description="In Ref. 2; AAN38707." evidence="15" ref="2">
    <original>APGR</original>
    <variation>GRG</variation>
    <location>
        <begin position="44"/>
        <end position="47"/>
    </location>
</feature>
<feature type="sequence conflict" description="In Ref. 1; AAP22132." evidence="15" ref="1">
    <original>F</original>
    <variation>L</variation>
    <location>
        <position position="90"/>
    </location>
</feature>
<feature type="sequence conflict" description="In Ref. 1; AAP22132." evidence="15" ref="1">
    <original>D</original>
    <variation>G</variation>
    <location>
        <position position="360"/>
    </location>
</feature>
<feature type="sequence conflict" description="In Ref. 6; AK098170." evidence="15" ref="6">
    <original>S</original>
    <variation>T</variation>
    <location>
        <position position="457"/>
    </location>
</feature>
<feature type="sequence conflict" description="In Ref. 2; AAN38707." evidence="15" ref="2">
    <original>M</original>
    <variation>I</variation>
    <location>
        <position position="488"/>
    </location>
</feature>
<feature type="sequence conflict" description="In Ref. 6; BAB15210." evidence="15" ref="6">
    <original>I</original>
    <variation>V</variation>
    <location>
        <position position="579"/>
    </location>
</feature>
<feature type="sequence conflict" description="In Ref. 6; BAB15210." evidence="15" ref="6">
    <original>S</original>
    <variation>G</variation>
    <location>
        <position position="1068"/>
    </location>
</feature>
<name>CAPS2_HUMAN</name>
<keyword id="KW-0025">Alternative splicing</keyword>
<keyword id="KW-0106">Calcium</keyword>
<keyword id="KW-0966">Cell projection</keyword>
<keyword id="KW-0963">Cytoplasm</keyword>
<keyword id="KW-0968">Cytoplasmic vesicle</keyword>
<keyword id="KW-0206">Cytoskeleton</keyword>
<keyword id="KW-0268">Exocytosis</keyword>
<keyword id="KW-0446">Lipid-binding</keyword>
<keyword id="KW-0472">Membrane</keyword>
<keyword id="KW-0479">Metal-binding</keyword>
<keyword id="KW-0597">Phosphoprotein</keyword>
<keyword id="KW-0653">Protein transport</keyword>
<keyword id="KW-1267">Proteomics identification</keyword>
<keyword id="KW-1185">Reference proteome</keyword>
<keyword id="KW-0770">Synapse</keyword>
<keyword id="KW-0813">Transport</keyword>